<gene>
    <name type="primary">ctps</name>
    <name type="ORF">DDB_G0280567</name>
</gene>
<sequence>MKYIVVTGGVLSGIGKGIIASSTAMILKSMGLRVTSIKIDPYLNIDAGTMSPFEHGEVFVLDDGGEVDLDLGNYERFLDVNLGKDNNITTGKIYNLVIEKERKGQYLGKTVQVVPHITEEIQNWIERVAHLPVDGDKGTPDVCVIELGGTVGDIESMPFTEALRQFQFRVGVENFCLMHVSLVPVLGVVGEQKTKPSQQSIRELRSLGLSPDFCLCRSTQPLTEETKKKISLFCHVAPDNVIGVHDVSNIYRVPILLNQQNLPNLVLRRLQLNPKVDLSKTSPSESTPYWMASWKGLADRMDKITNESLNPIRIAMVGKYTGLTDAYLSVIKALDHASMAIERKMVIDWVEASNLETQNSSTAEYKKSWEMLRGAHGILVPGGFGDRGIEGMILTANYARTSGKPFLGICLGLQIAVIEYARNVMGWENANSEEFSASGSGKNVVVFMPEVSKTHMGGTMRLGSRDTIFTDVDNKISKLYNVDKVGQAVEERHRHRYEVNPEVVDEIHAKGLHFVGKDTTGVRMEIVELKDHDYYVACQFHPEFKSRPQRPSPPFIGLLNASLERLKKM</sequence>
<feature type="chain" id="PRO_0000327649" description="CTP synthase">
    <location>
        <begin position="1"/>
        <end position="569"/>
    </location>
</feature>
<feature type="domain" description="Glutamine amidotransferase type-1" evidence="2">
    <location>
        <begin position="313"/>
        <end position="569"/>
    </location>
</feature>
<feature type="active site" description="Nucleophile" evidence="2">
    <location>
        <position position="410"/>
    </location>
</feature>
<feature type="active site" evidence="2">
    <location>
        <position position="541"/>
    </location>
</feature>
<feature type="active site" evidence="2">
    <location>
        <position position="543"/>
    </location>
</feature>
<evidence type="ECO:0000250" key="1"/>
<evidence type="ECO:0000255" key="2">
    <source>
        <dbReference type="PROSITE-ProRule" id="PRU00605"/>
    </source>
</evidence>
<evidence type="ECO:0000305" key="3"/>
<accession>Q54V77</accession>
<proteinExistence type="inferred from homology"/>
<keyword id="KW-0067">ATP-binding</keyword>
<keyword id="KW-0315">Glutamine amidotransferase</keyword>
<keyword id="KW-0436">Ligase</keyword>
<keyword id="KW-0547">Nucleotide-binding</keyword>
<keyword id="KW-0665">Pyrimidine biosynthesis</keyword>
<keyword id="KW-1185">Reference proteome</keyword>
<reference key="1">
    <citation type="journal article" date="2005" name="Nature">
        <title>The genome of the social amoeba Dictyostelium discoideum.</title>
        <authorList>
            <person name="Eichinger L."/>
            <person name="Pachebat J.A."/>
            <person name="Gloeckner G."/>
            <person name="Rajandream M.A."/>
            <person name="Sucgang R."/>
            <person name="Berriman M."/>
            <person name="Song J."/>
            <person name="Olsen R."/>
            <person name="Szafranski K."/>
            <person name="Xu Q."/>
            <person name="Tunggal B."/>
            <person name="Kummerfeld S."/>
            <person name="Madera M."/>
            <person name="Konfortov B.A."/>
            <person name="Rivero F."/>
            <person name="Bankier A.T."/>
            <person name="Lehmann R."/>
            <person name="Hamlin N."/>
            <person name="Davies R."/>
            <person name="Gaudet P."/>
            <person name="Fey P."/>
            <person name="Pilcher K."/>
            <person name="Chen G."/>
            <person name="Saunders D."/>
            <person name="Sodergren E.J."/>
            <person name="Davis P."/>
            <person name="Kerhornou A."/>
            <person name="Nie X."/>
            <person name="Hall N."/>
            <person name="Anjard C."/>
            <person name="Hemphill L."/>
            <person name="Bason N."/>
            <person name="Farbrother P."/>
            <person name="Desany B."/>
            <person name="Just E."/>
            <person name="Morio T."/>
            <person name="Rost R."/>
            <person name="Churcher C.M."/>
            <person name="Cooper J."/>
            <person name="Haydock S."/>
            <person name="van Driessche N."/>
            <person name="Cronin A."/>
            <person name="Goodhead I."/>
            <person name="Muzny D.M."/>
            <person name="Mourier T."/>
            <person name="Pain A."/>
            <person name="Lu M."/>
            <person name="Harper D."/>
            <person name="Lindsay R."/>
            <person name="Hauser H."/>
            <person name="James K.D."/>
            <person name="Quiles M."/>
            <person name="Madan Babu M."/>
            <person name="Saito T."/>
            <person name="Buchrieser C."/>
            <person name="Wardroper A."/>
            <person name="Felder M."/>
            <person name="Thangavelu M."/>
            <person name="Johnson D."/>
            <person name="Knights A."/>
            <person name="Loulseged H."/>
            <person name="Mungall K.L."/>
            <person name="Oliver K."/>
            <person name="Price C."/>
            <person name="Quail M.A."/>
            <person name="Urushihara H."/>
            <person name="Hernandez J."/>
            <person name="Rabbinowitsch E."/>
            <person name="Steffen D."/>
            <person name="Sanders M."/>
            <person name="Ma J."/>
            <person name="Kohara Y."/>
            <person name="Sharp S."/>
            <person name="Simmonds M.N."/>
            <person name="Spiegler S."/>
            <person name="Tivey A."/>
            <person name="Sugano S."/>
            <person name="White B."/>
            <person name="Walker D."/>
            <person name="Woodward J.R."/>
            <person name="Winckler T."/>
            <person name="Tanaka Y."/>
            <person name="Shaulsky G."/>
            <person name="Schleicher M."/>
            <person name="Weinstock G.M."/>
            <person name="Rosenthal A."/>
            <person name="Cox E.C."/>
            <person name="Chisholm R.L."/>
            <person name="Gibbs R.A."/>
            <person name="Loomis W.F."/>
            <person name="Platzer M."/>
            <person name="Kay R.R."/>
            <person name="Williams J.G."/>
            <person name="Dear P.H."/>
            <person name="Noegel A.A."/>
            <person name="Barrell B.G."/>
            <person name="Kuspa A."/>
        </authorList>
    </citation>
    <scope>NUCLEOTIDE SEQUENCE [LARGE SCALE GENOMIC DNA]</scope>
    <source>
        <strain>AX4</strain>
    </source>
</reference>
<dbReference type="EC" id="6.3.4.2"/>
<dbReference type="EMBL" id="AAFI02000037">
    <property type="protein sequence ID" value="EAL67085.1"/>
    <property type="molecule type" value="Genomic_DNA"/>
</dbReference>
<dbReference type="RefSeq" id="XP_641054.1">
    <property type="nucleotide sequence ID" value="XM_635962.1"/>
</dbReference>
<dbReference type="SMR" id="Q54V77"/>
<dbReference type="FunCoup" id="Q54V77">
    <property type="interactions" value="324"/>
</dbReference>
<dbReference type="STRING" id="44689.Q54V77"/>
<dbReference type="MEROPS" id="C26.A36"/>
<dbReference type="PaxDb" id="44689-DDB0230162"/>
<dbReference type="EnsemblProtists" id="EAL67085">
    <property type="protein sequence ID" value="EAL67085"/>
    <property type="gene ID" value="DDB_G0280567"/>
</dbReference>
<dbReference type="GeneID" id="8622612"/>
<dbReference type="KEGG" id="ddi:DDB_G0280567"/>
<dbReference type="dictyBase" id="DDB_G0280567">
    <property type="gene designation" value="ctps"/>
</dbReference>
<dbReference type="VEuPathDB" id="AmoebaDB:DDB_G0280567"/>
<dbReference type="eggNOG" id="KOG2387">
    <property type="taxonomic scope" value="Eukaryota"/>
</dbReference>
<dbReference type="HOGENOM" id="CLU_011675_5_0_1"/>
<dbReference type="InParanoid" id="Q54V77"/>
<dbReference type="OMA" id="EFNNAYR"/>
<dbReference type="PhylomeDB" id="Q54V77"/>
<dbReference type="Reactome" id="R-DDI-499943">
    <property type="pathway name" value="Interconversion of nucleotide di- and triphosphates"/>
</dbReference>
<dbReference type="UniPathway" id="UPA00159">
    <property type="reaction ID" value="UER00277"/>
</dbReference>
<dbReference type="PRO" id="PR:Q54V77"/>
<dbReference type="Proteomes" id="UP000002195">
    <property type="component" value="Chromosome 3"/>
</dbReference>
<dbReference type="GO" id="GO:0097268">
    <property type="term" value="C:cytoophidium"/>
    <property type="evidence" value="ECO:0000318"/>
    <property type="project" value="GO_Central"/>
</dbReference>
<dbReference type="GO" id="GO:0005737">
    <property type="term" value="C:cytoplasm"/>
    <property type="evidence" value="ECO:0000318"/>
    <property type="project" value="GO_Central"/>
</dbReference>
<dbReference type="GO" id="GO:0005524">
    <property type="term" value="F:ATP binding"/>
    <property type="evidence" value="ECO:0007669"/>
    <property type="project" value="UniProtKB-KW"/>
</dbReference>
<dbReference type="GO" id="GO:0003883">
    <property type="term" value="F:CTP synthase activity"/>
    <property type="evidence" value="ECO:0000250"/>
    <property type="project" value="dictyBase"/>
</dbReference>
<dbReference type="GO" id="GO:0042802">
    <property type="term" value="F:identical protein binding"/>
    <property type="evidence" value="ECO:0000318"/>
    <property type="project" value="GO_Central"/>
</dbReference>
<dbReference type="GO" id="GO:0044210">
    <property type="term" value="P:'de novo' CTP biosynthetic process"/>
    <property type="evidence" value="ECO:0007669"/>
    <property type="project" value="UniProtKB-UniPathway"/>
</dbReference>
<dbReference type="GO" id="GO:0006241">
    <property type="term" value="P:CTP biosynthetic process"/>
    <property type="evidence" value="ECO:0000250"/>
    <property type="project" value="dictyBase"/>
</dbReference>
<dbReference type="GO" id="GO:0008654">
    <property type="term" value="P:phospholipid biosynthetic process"/>
    <property type="evidence" value="ECO:0000250"/>
    <property type="project" value="dictyBase"/>
</dbReference>
<dbReference type="GO" id="GO:0019856">
    <property type="term" value="P:pyrimidine nucleobase biosynthetic process"/>
    <property type="evidence" value="ECO:0000250"/>
    <property type="project" value="dictyBase"/>
</dbReference>
<dbReference type="CDD" id="cd03113">
    <property type="entry name" value="CTPS_N"/>
    <property type="match status" value="1"/>
</dbReference>
<dbReference type="CDD" id="cd01746">
    <property type="entry name" value="GATase1_CTP_Synthase"/>
    <property type="match status" value="1"/>
</dbReference>
<dbReference type="FunFam" id="3.40.50.300:FF:000207">
    <property type="entry name" value="CTP synthase"/>
    <property type="match status" value="1"/>
</dbReference>
<dbReference type="FunFam" id="3.40.50.880:FF:000005">
    <property type="entry name" value="CTP synthase"/>
    <property type="match status" value="1"/>
</dbReference>
<dbReference type="Gene3D" id="3.40.50.880">
    <property type="match status" value="1"/>
</dbReference>
<dbReference type="Gene3D" id="3.40.50.300">
    <property type="entry name" value="P-loop containing nucleotide triphosphate hydrolases"/>
    <property type="match status" value="1"/>
</dbReference>
<dbReference type="InterPro" id="IPR029062">
    <property type="entry name" value="Class_I_gatase-like"/>
</dbReference>
<dbReference type="InterPro" id="IPR004468">
    <property type="entry name" value="CTP_synthase"/>
</dbReference>
<dbReference type="InterPro" id="IPR017456">
    <property type="entry name" value="CTP_synthase_N"/>
</dbReference>
<dbReference type="InterPro" id="IPR017926">
    <property type="entry name" value="GATASE"/>
</dbReference>
<dbReference type="InterPro" id="IPR033828">
    <property type="entry name" value="GATase1_CTP_Synthase"/>
</dbReference>
<dbReference type="InterPro" id="IPR027417">
    <property type="entry name" value="P-loop_NTPase"/>
</dbReference>
<dbReference type="NCBIfam" id="NF003792">
    <property type="entry name" value="PRK05380.1"/>
    <property type="match status" value="1"/>
</dbReference>
<dbReference type="NCBIfam" id="TIGR00337">
    <property type="entry name" value="PyrG"/>
    <property type="match status" value="1"/>
</dbReference>
<dbReference type="PANTHER" id="PTHR11550">
    <property type="entry name" value="CTP SYNTHASE"/>
    <property type="match status" value="1"/>
</dbReference>
<dbReference type="PANTHER" id="PTHR11550:SF0">
    <property type="entry name" value="CTP SYNTHASE-RELATED"/>
    <property type="match status" value="1"/>
</dbReference>
<dbReference type="Pfam" id="PF06418">
    <property type="entry name" value="CTP_synth_N"/>
    <property type="match status" value="1"/>
</dbReference>
<dbReference type="Pfam" id="PF00117">
    <property type="entry name" value="GATase"/>
    <property type="match status" value="1"/>
</dbReference>
<dbReference type="SUPFAM" id="SSF52317">
    <property type="entry name" value="Class I glutamine amidotransferase-like"/>
    <property type="match status" value="1"/>
</dbReference>
<dbReference type="SUPFAM" id="SSF52540">
    <property type="entry name" value="P-loop containing nucleoside triphosphate hydrolases"/>
    <property type="match status" value="1"/>
</dbReference>
<dbReference type="PROSITE" id="PS51273">
    <property type="entry name" value="GATASE_TYPE_1"/>
    <property type="match status" value="1"/>
</dbReference>
<name>PYRG_DICDI</name>
<organism>
    <name type="scientific">Dictyostelium discoideum</name>
    <name type="common">Social amoeba</name>
    <dbReference type="NCBI Taxonomy" id="44689"/>
    <lineage>
        <taxon>Eukaryota</taxon>
        <taxon>Amoebozoa</taxon>
        <taxon>Evosea</taxon>
        <taxon>Eumycetozoa</taxon>
        <taxon>Dictyostelia</taxon>
        <taxon>Dictyosteliales</taxon>
        <taxon>Dictyosteliaceae</taxon>
        <taxon>Dictyostelium</taxon>
    </lineage>
</organism>
<comment type="function">
    <text evidence="1">Catalyzes the ATP-dependent amination of UTP to CTP with either L-glutamine or ammonia as the source of nitrogen.</text>
</comment>
<comment type="catalytic activity">
    <reaction>
        <text>UTP + L-glutamine + ATP + H2O = CTP + L-glutamate + ADP + phosphate + 2 H(+)</text>
        <dbReference type="Rhea" id="RHEA:26426"/>
        <dbReference type="ChEBI" id="CHEBI:15377"/>
        <dbReference type="ChEBI" id="CHEBI:15378"/>
        <dbReference type="ChEBI" id="CHEBI:29985"/>
        <dbReference type="ChEBI" id="CHEBI:30616"/>
        <dbReference type="ChEBI" id="CHEBI:37563"/>
        <dbReference type="ChEBI" id="CHEBI:43474"/>
        <dbReference type="ChEBI" id="CHEBI:46398"/>
        <dbReference type="ChEBI" id="CHEBI:58359"/>
        <dbReference type="ChEBI" id="CHEBI:456216"/>
        <dbReference type="EC" id="6.3.4.2"/>
    </reaction>
</comment>
<comment type="pathway">
    <text>Pyrimidine metabolism; CTP biosynthesis via de novo pathway; CTP from UDP: step 2/2.</text>
</comment>
<comment type="similarity">
    <text evidence="3">Belongs to the CTP synthase family.</text>
</comment>
<protein>
    <recommendedName>
        <fullName>CTP synthase</fullName>
        <ecNumber>6.3.4.2</ecNumber>
    </recommendedName>
    <alternativeName>
        <fullName>CTP synthetase</fullName>
    </alternativeName>
    <alternativeName>
        <fullName>UTP--ammonia ligase</fullName>
    </alternativeName>
</protein>